<keyword id="KW-0963">Cytoplasm</keyword>
<keyword id="KW-0275">Fatty acid biosynthesis</keyword>
<keyword id="KW-0276">Fatty acid metabolism</keyword>
<keyword id="KW-0444">Lipid biosynthesis</keyword>
<keyword id="KW-0443">Lipid metabolism</keyword>
<keyword id="KW-0460">Magnesium</keyword>
<keyword id="KW-0479">Metal-binding</keyword>
<keyword id="KW-1185">Reference proteome</keyword>
<keyword id="KW-0808">Transferase</keyword>
<comment type="function">
    <text evidence="1">Transfers the 4'-phosphopantetheine moiety from coenzyme A to a Ser of acyl-carrier-protein.</text>
</comment>
<comment type="catalytic activity">
    <reaction evidence="1">
        <text>apo-[ACP] + CoA = holo-[ACP] + adenosine 3',5'-bisphosphate + H(+)</text>
        <dbReference type="Rhea" id="RHEA:12068"/>
        <dbReference type="Rhea" id="RHEA-COMP:9685"/>
        <dbReference type="Rhea" id="RHEA-COMP:9690"/>
        <dbReference type="ChEBI" id="CHEBI:15378"/>
        <dbReference type="ChEBI" id="CHEBI:29999"/>
        <dbReference type="ChEBI" id="CHEBI:57287"/>
        <dbReference type="ChEBI" id="CHEBI:58343"/>
        <dbReference type="ChEBI" id="CHEBI:64479"/>
        <dbReference type="EC" id="2.7.8.7"/>
    </reaction>
</comment>
<comment type="cofactor">
    <cofactor evidence="1">
        <name>Mg(2+)</name>
        <dbReference type="ChEBI" id="CHEBI:18420"/>
    </cofactor>
</comment>
<comment type="subcellular location">
    <subcellularLocation>
        <location evidence="1">Cytoplasm</location>
    </subcellularLocation>
</comment>
<comment type="similarity">
    <text evidence="1">Belongs to the P-Pant transferase superfamily. AcpS family.</text>
</comment>
<reference key="1">
    <citation type="journal article" date="2004" name="Genome Res.">
        <title>The genome sequence of Mycoplasma mycoides subsp. mycoides SC type strain PG1T, the causative agent of contagious bovine pleuropneumonia (CBPP).</title>
        <authorList>
            <person name="Westberg J."/>
            <person name="Persson A."/>
            <person name="Holmberg A."/>
            <person name="Goesmann A."/>
            <person name="Lundeberg J."/>
            <person name="Johansson K.-E."/>
            <person name="Pettersson B."/>
            <person name="Uhlen M."/>
        </authorList>
    </citation>
    <scope>NUCLEOTIDE SEQUENCE [LARGE SCALE GENOMIC DNA]</scope>
    <source>
        <strain>CCUG 32753 / NCTC 10114 / PG1</strain>
    </source>
</reference>
<gene>
    <name evidence="1" type="primary">acpS</name>
    <name type="ordered locus">MSC_0578</name>
</gene>
<feature type="chain" id="PRO_0000175671" description="Holo-[acyl-carrier-protein] synthase">
    <location>
        <begin position="1"/>
        <end position="110"/>
    </location>
</feature>
<feature type="binding site" evidence="1">
    <location>
        <position position="8"/>
    </location>
    <ligand>
        <name>Mg(2+)</name>
        <dbReference type="ChEBI" id="CHEBI:18420"/>
    </ligand>
</feature>
<feature type="binding site" evidence="1">
    <location>
        <position position="54"/>
    </location>
    <ligand>
        <name>Mg(2+)</name>
        <dbReference type="ChEBI" id="CHEBI:18420"/>
    </ligand>
</feature>
<organism>
    <name type="scientific">Mycoplasma mycoides subsp. mycoides SC (strain CCUG 32753 / NCTC 10114 / PG1)</name>
    <dbReference type="NCBI Taxonomy" id="272632"/>
    <lineage>
        <taxon>Bacteria</taxon>
        <taxon>Bacillati</taxon>
        <taxon>Mycoplasmatota</taxon>
        <taxon>Mollicutes</taxon>
        <taxon>Mycoplasmataceae</taxon>
        <taxon>Mycoplasma</taxon>
    </lineage>
</organism>
<sequence>MINNVGIDIVENKRIKLKKEFIIKVLSTNEIQTFNTKTKKQKKEFLAGRWAVKEAIIKTLDQAISMNKIDIEYVNQKPVIQNKELQNILISISHEKKYAIGIALKQSDNK</sequence>
<dbReference type="EC" id="2.7.8.7" evidence="1"/>
<dbReference type="EMBL" id="BX293980">
    <property type="protein sequence ID" value="CAE77201.1"/>
    <property type="molecule type" value="Genomic_DNA"/>
</dbReference>
<dbReference type="RefSeq" id="NP_975559.1">
    <property type="nucleotide sequence ID" value="NC_005364.2"/>
</dbReference>
<dbReference type="RefSeq" id="WP_011166756.1">
    <property type="nucleotide sequence ID" value="NC_005364.2"/>
</dbReference>
<dbReference type="SMR" id="Q6MT35"/>
<dbReference type="STRING" id="272632.MSC_0578"/>
<dbReference type="GeneID" id="93426281"/>
<dbReference type="KEGG" id="mmy:MSC_0578"/>
<dbReference type="PATRIC" id="fig|272632.4.peg.624"/>
<dbReference type="eggNOG" id="COG0736">
    <property type="taxonomic scope" value="Bacteria"/>
</dbReference>
<dbReference type="HOGENOM" id="CLU_089696_1_1_14"/>
<dbReference type="Proteomes" id="UP000001016">
    <property type="component" value="Chromosome"/>
</dbReference>
<dbReference type="GO" id="GO:0005737">
    <property type="term" value="C:cytoplasm"/>
    <property type="evidence" value="ECO:0007669"/>
    <property type="project" value="UniProtKB-SubCell"/>
</dbReference>
<dbReference type="GO" id="GO:0008897">
    <property type="term" value="F:holo-[acyl-carrier-protein] synthase activity"/>
    <property type="evidence" value="ECO:0007669"/>
    <property type="project" value="UniProtKB-UniRule"/>
</dbReference>
<dbReference type="GO" id="GO:0000287">
    <property type="term" value="F:magnesium ion binding"/>
    <property type="evidence" value="ECO:0007669"/>
    <property type="project" value="UniProtKB-UniRule"/>
</dbReference>
<dbReference type="GO" id="GO:0006633">
    <property type="term" value="P:fatty acid biosynthetic process"/>
    <property type="evidence" value="ECO:0007669"/>
    <property type="project" value="UniProtKB-UniRule"/>
</dbReference>
<dbReference type="Gene3D" id="3.90.470.20">
    <property type="entry name" value="4'-phosphopantetheinyl transferase domain"/>
    <property type="match status" value="1"/>
</dbReference>
<dbReference type="HAMAP" id="MF_00101">
    <property type="entry name" value="AcpS"/>
    <property type="match status" value="1"/>
</dbReference>
<dbReference type="InterPro" id="IPR008278">
    <property type="entry name" value="4-PPantetheinyl_Trfase_dom"/>
</dbReference>
<dbReference type="InterPro" id="IPR037143">
    <property type="entry name" value="4-PPantetheinyl_Trfase_dom_sf"/>
</dbReference>
<dbReference type="InterPro" id="IPR002582">
    <property type="entry name" value="ACPS"/>
</dbReference>
<dbReference type="InterPro" id="IPR004568">
    <property type="entry name" value="Ppantetheine-prot_Trfase_dom"/>
</dbReference>
<dbReference type="NCBIfam" id="TIGR00556">
    <property type="entry name" value="pantethn_trn"/>
    <property type="match status" value="1"/>
</dbReference>
<dbReference type="Pfam" id="PF01648">
    <property type="entry name" value="ACPS"/>
    <property type="match status" value="1"/>
</dbReference>
<dbReference type="SUPFAM" id="SSF56214">
    <property type="entry name" value="4'-phosphopantetheinyl transferase"/>
    <property type="match status" value="1"/>
</dbReference>
<evidence type="ECO:0000255" key="1">
    <source>
        <dbReference type="HAMAP-Rule" id="MF_00101"/>
    </source>
</evidence>
<accession>Q6MT35</accession>
<proteinExistence type="inferred from homology"/>
<protein>
    <recommendedName>
        <fullName evidence="1">Holo-[acyl-carrier-protein] synthase</fullName>
        <shortName evidence="1">Holo-ACP synthase</shortName>
        <ecNumber evidence="1">2.7.8.7</ecNumber>
    </recommendedName>
    <alternativeName>
        <fullName evidence="1">4'-phosphopantetheinyl transferase AcpS</fullName>
    </alternativeName>
</protein>
<name>ACPS_MYCMS</name>